<sequence length="761" mass="84574">MSVQKMMWVPRKMVGGRIPFFTCSKVFSGFSRRSFHESPLARSTYEEEKVLVDEIKQKLTPDDIGRCNKLRNIGISAHIDSGKTTFTERVLYYTKRIKAIHEVRGRDNVGAKMDSMDLEREKGITIQSAATYCSWDKEGKNYHFNLIDTPGHIDFTIEVERALRVLDGAVLVVCAVSGVQSQTVTVDRQMRRYNVPRVTFINKMDRMGSDPFRAIEQLNSKLKIPAAAVQIPIGSESSLSGVVDLINRVAIYNKGDNGEIIEKGPVPENLKPLMEEKRQLLIETLADVDDEMAEMFLEEKEPTTQQIKDAIRRSTIARSFTPVLMGSALANTGIQPVLDAIVDYLPNPSEVLNTALDVSNNEAKVNLVPAVQQPFVGLAFKLEEGKYGQLTYVRVYQGRLRKGNYITNVKTGKKVKVARLVRMHSSEMEDVDEVGSGEICATFGIDCASGDTFTDGSVQYSMSSMYVPDAVVSLSITPNSKDASNFSKALNRFQKEDPTFRVKFDPESKETIISGMGELHLEIYVERMRREYNVDCVTGKPQVSYRESITIPADFDYTHKKQSGGAGQYGRVIGTLSPVDDITKGNIFETAIVGGRIPDKYLAACGKGFEEVCEKGPLIGHRVLDVKMLINDGAIHAVDSNELSFKTATMSAFRDAFLRAQPVIMEPIMNVSVTSPNEFQGNVIGLLNKLQAVIQDTENGHDEFTLKAECALSTMFGFATSLRASTQGKGEFSLEFSHYAPTAPHVQKELISEFQKKQAKK</sequence>
<proteinExistence type="evidence at protein level"/>
<evidence type="ECO:0000255" key="1">
    <source>
        <dbReference type="HAMAP-Rule" id="MF_03061"/>
    </source>
</evidence>
<evidence type="ECO:0000269" key="2">
    <source>
    </source>
</evidence>
<evidence type="ECO:0000269" key="3">
    <source>
    </source>
</evidence>
<evidence type="ECO:0000269" key="4">
    <source>
    </source>
</evidence>
<evidence type="ECO:0000305" key="5"/>
<keyword id="KW-0251">Elongation factor</keyword>
<keyword id="KW-0342">GTP-binding</keyword>
<keyword id="KW-0496">Mitochondrion</keyword>
<keyword id="KW-0547">Nucleotide-binding</keyword>
<keyword id="KW-0648">Protein biosynthesis</keyword>
<keyword id="KW-1185">Reference proteome</keyword>
<keyword id="KW-0809">Transit peptide</keyword>
<organism>
    <name type="scientific">Saccharomyces cerevisiae (strain ATCC 204508 / S288c)</name>
    <name type="common">Baker's yeast</name>
    <dbReference type="NCBI Taxonomy" id="559292"/>
    <lineage>
        <taxon>Eukaryota</taxon>
        <taxon>Fungi</taxon>
        <taxon>Dikarya</taxon>
        <taxon>Ascomycota</taxon>
        <taxon>Saccharomycotina</taxon>
        <taxon>Saccharomycetes</taxon>
        <taxon>Saccharomycetales</taxon>
        <taxon>Saccharomycetaceae</taxon>
        <taxon>Saccharomyces</taxon>
    </lineage>
</organism>
<dbReference type="EMBL" id="X58378">
    <property type="protein sequence ID" value="CAA41267.1"/>
    <property type="molecule type" value="Genomic_DNA"/>
</dbReference>
<dbReference type="EMBL" id="X94607">
    <property type="protein sequence ID" value="CAA64315.1"/>
    <property type="molecule type" value="Genomic_DNA"/>
</dbReference>
<dbReference type="EMBL" id="Z73241">
    <property type="protein sequence ID" value="CAA97626.1"/>
    <property type="molecule type" value="Genomic_DNA"/>
</dbReference>
<dbReference type="EMBL" id="AY692944">
    <property type="protein sequence ID" value="AAT92963.1"/>
    <property type="molecule type" value="Genomic_DNA"/>
</dbReference>
<dbReference type="EMBL" id="BK006945">
    <property type="protein sequence ID" value="DAA09386.1"/>
    <property type="molecule type" value="Genomic_DNA"/>
</dbReference>
<dbReference type="PIR" id="S61642">
    <property type="entry name" value="S61642"/>
</dbReference>
<dbReference type="RefSeq" id="NP_013170.1">
    <property type="nucleotide sequence ID" value="NM_001181956.1"/>
</dbReference>
<dbReference type="SMR" id="P25039"/>
<dbReference type="BioGRID" id="31343">
    <property type="interactions" value="80"/>
</dbReference>
<dbReference type="FunCoup" id="P25039">
    <property type="interactions" value="789"/>
</dbReference>
<dbReference type="IntAct" id="P25039">
    <property type="interactions" value="3"/>
</dbReference>
<dbReference type="MINT" id="P25039"/>
<dbReference type="STRING" id="4932.YLR069C"/>
<dbReference type="iPTMnet" id="P25039"/>
<dbReference type="PaxDb" id="4932-YLR069C"/>
<dbReference type="PeptideAtlas" id="P25039"/>
<dbReference type="EnsemblFungi" id="YLR069C_mRNA">
    <property type="protein sequence ID" value="YLR069C"/>
    <property type="gene ID" value="YLR069C"/>
</dbReference>
<dbReference type="GeneID" id="850758"/>
<dbReference type="KEGG" id="sce:YLR069C"/>
<dbReference type="AGR" id="SGD:S000004059"/>
<dbReference type="SGD" id="S000004059">
    <property type="gene designation" value="MEF1"/>
</dbReference>
<dbReference type="VEuPathDB" id="FungiDB:YLR069C"/>
<dbReference type="eggNOG" id="KOG0465">
    <property type="taxonomic scope" value="Eukaryota"/>
</dbReference>
<dbReference type="GeneTree" id="ENSGT00550000074911"/>
<dbReference type="HOGENOM" id="CLU_002794_4_1_1"/>
<dbReference type="InParanoid" id="P25039"/>
<dbReference type="OMA" id="GQFAKVQ"/>
<dbReference type="OrthoDB" id="198619at2759"/>
<dbReference type="BioCyc" id="YEAST:G3O-32222-MONOMER"/>
<dbReference type="UniPathway" id="UPA00345"/>
<dbReference type="BioGRID-ORCS" id="850758">
    <property type="hits" value="1 hit in 10 CRISPR screens"/>
</dbReference>
<dbReference type="PRO" id="PR:P25039"/>
<dbReference type="Proteomes" id="UP000002311">
    <property type="component" value="Chromosome XII"/>
</dbReference>
<dbReference type="RNAct" id="P25039">
    <property type="molecule type" value="protein"/>
</dbReference>
<dbReference type="GO" id="GO:0005829">
    <property type="term" value="C:cytosol"/>
    <property type="evidence" value="ECO:0007005"/>
    <property type="project" value="SGD"/>
</dbReference>
<dbReference type="GO" id="GO:0005739">
    <property type="term" value="C:mitochondrion"/>
    <property type="evidence" value="ECO:0000315"/>
    <property type="project" value="SGD"/>
</dbReference>
<dbReference type="GO" id="GO:0005525">
    <property type="term" value="F:GTP binding"/>
    <property type="evidence" value="ECO:0007669"/>
    <property type="project" value="UniProtKB-UniRule"/>
</dbReference>
<dbReference type="GO" id="GO:0003924">
    <property type="term" value="F:GTPase activity"/>
    <property type="evidence" value="ECO:0000318"/>
    <property type="project" value="GO_Central"/>
</dbReference>
<dbReference type="GO" id="GO:0003746">
    <property type="term" value="F:translation elongation factor activity"/>
    <property type="evidence" value="ECO:0000247"/>
    <property type="project" value="SGD"/>
</dbReference>
<dbReference type="GO" id="GO:0032543">
    <property type="term" value="P:mitochondrial translation"/>
    <property type="evidence" value="ECO:0000315"/>
    <property type="project" value="SGD"/>
</dbReference>
<dbReference type="GO" id="GO:0070125">
    <property type="term" value="P:mitochondrial translational elongation"/>
    <property type="evidence" value="ECO:0000247"/>
    <property type="project" value="SGD"/>
</dbReference>
<dbReference type="CDD" id="cd01886">
    <property type="entry name" value="EF-G"/>
    <property type="match status" value="1"/>
</dbReference>
<dbReference type="CDD" id="cd16262">
    <property type="entry name" value="EFG_III"/>
    <property type="match status" value="1"/>
</dbReference>
<dbReference type="CDD" id="cd01434">
    <property type="entry name" value="EFG_mtEFG1_IV"/>
    <property type="match status" value="1"/>
</dbReference>
<dbReference type="CDD" id="cd04097">
    <property type="entry name" value="mtEFG1_C"/>
    <property type="match status" value="1"/>
</dbReference>
<dbReference type="CDD" id="cd04091">
    <property type="entry name" value="mtEFG1_II_like"/>
    <property type="match status" value="1"/>
</dbReference>
<dbReference type="FunFam" id="3.30.230.10:FF:000003">
    <property type="entry name" value="Elongation factor G"/>
    <property type="match status" value="1"/>
</dbReference>
<dbReference type="FunFam" id="3.30.70.870:FF:000001">
    <property type="entry name" value="Elongation factor G"/>
    <property type="match status" value="1"/>
</dbReference>
<dbReference type="FunFam" id="2.40.30.10:FF:000022">
    <property type="entry name" value="Elongation factor G, mitochondrial"/>
    <property type="match status" value="1"/>
</dbReference>
<dbReference type="FunFam" id="3.30.70.240:FF:000015">
    <property type="entry name" value="Elongation factor G, mitochondrial"/>
    <property type="match status" value="1"/>
</dbReference>
<dbReference type="FunFam" id="3.40.50.300:FF:000558">
    <property type="entry name" value="Elongation factor G, mitochondrial"/>
    <property type="match status" value="1"/>
</dbReference>
<dbReference type="Gene3D" id="3.30.230.10">
    <property type="match status" value="1"/>
</dbReference>
<dbReference type="Gene3D" id="3.30.70.240">
    <property type="match status" value="1"/>
</dbReference>
<dbReference type="Gene3D" id="3.30.70.870">
    <property type="entry name" value="Elongation Factor G (Translational Gtpase), domain 3"/>
    <property type="match status" value="1"/>
</dbReference>
<dbReference type="Gene3D" id="3.40.50.300">
    <property type="entry name" value="P-loop containing nucleotide triphosphate hydrolases"/>
    <property type="match status" value="1"/>
</dbReference>
<dbReference type="Gene3D" id="2.40.30.10">
    <property type="entry name" value="Translation factors"/>
    <property type="match status" value="1"/>
</dbReference>
<dbReference type="HAMAP" id="MF_00054_B">
    <property type="entry name" value="EF_G_EF_2_B"/>
    <property type="match status" value="1"/>
</dbReference>
<dbReference type="InterPro" id="IPR041095">
    <property type="entry name" value="EFG_II"/>
</dbReference>
<dbReference type="InterPro" id="IPR009022">
    <property type="entry name" value="EFG_III"/>
</dbReference>
<dbReference type="InterPro" id="IPR035647">
    <property type="entry name" value="EFG_III/V"/>
</dbReference>
<dbReference type="InterPro" id="IPR047872">
    <property type="entry name" value="EFG_IV"/>
</dbReference>
<dbReference type="InterPro" id="IPR035649">
    <property type="entry name" value="EFG_V"/>
</dbReference>
<dbReference type="InterPro" id="IPR000640">
    <property type="entry name" value="EFG_V-like"/>
</dbReference>
<dbReference type="InterPro" id="IPR004161">
    <property type="entry name" value="EFTu-like_2"/>
</dbReference>
<dbReference type="InterPro" id="IPR031157">
    <property type="entry name" value="G_TR_CS"/>
</dbReference>
<dbReference type="InterPro" id="IPR027417">
    <property type="entry name" value="P-loop_NTPase"/>
</dbReference>
<dbReference type="InterPro" id="IPR020568">
    <property type="entry name" value="Ribosomal_Su5_D2-typ_SF"/>
</dbReference>
<dbReference type="InterPro" id="IPR014721">
    <property type="entry name" value="Ribsml_uS5_D2-typ_fold_subgr"/>
</dbReference>
<dbReference type="InterPro" id="IPR005225">
    <property type="entry name" value="Small_GTP-bd"/>
</dbReference>
<dbReference type="InterPro" id="IPR000795">
    <property type="entry name" value="T_Tr_GTP-bd_dom"/>
</dbReference>
<dbReference type="InterPro" id="IPR009000">
    <property type="entry name" value="Transl_B-barrel_sf"/>
</dbReference>
<dbReference type="InterPro" id="IPR004540">
    <property type="entry name" value="Transl_elong_EFG/EF2"/>
</dbReference>
<dbReference type="InterPro" id="IPR005517">
    <property type="entry name" value="Transl_elong_EFG/EF2_IV"/>
</dbReference>
<dbReference type="NCBIfam" id="TIGR00484">
    <property type="entry name" value="EF-G"/>
    <property type="match status" value="1"/>
</dbReference>
<dbReference type="NCBIfam" id="NF009381">
    <property type="entry name" value="PRK12740.1-5"/>
    <property type="match status" value="1"/>
</dbReference>
<dbReference type="NCBIfam" id="TIGR00231">
    <property type="entry name" value="small_GTP"/>
    <property type="match status" value="1"/>
</dbReference>
<dbReference type="PANTHER" id="PTHR43636">
    <property type="entry name" value="ELONGATION FACTOR G, MITOCHONDRIAL"/>
    <property type="match status" value="1"/>
</dbReference>
<dbReference type="PANTHER" id="PTHR43636:SF2">
    <property type="entry name" value="ELONGATION FACTOR G, MITOCHONDRIAL"/>
    <property type="match status" value="1"/>
</dbReference>
<dbReference type="Pfam" id="PF00679">
    <property type="entry name" value="EFG_C"/>
    <property type="match status" value="1"/>
</dbReference>
<dbReference type="Pfam" id="PF14492">
    <property type="entry name" value="EFG_III"/>
    <property type="match status" value="1"/>
</dbReference>
<dbReference type="Pfam" id="PF03764">
    <property type="entry name" value="EFG_IV"/>
    <property type="match status" value="1"/>
</dbReference>
<dbReference type="Pfam" id="PF00009">
    <property type="entry name" value="GTP_EFTU"/>
    <property type="match status" value="1"/>
</dbReference>
<dbReference type="Pfam" id="PF03144">
    <property type="entry name" value="GTP_EFTU_D2"/>
    <property type="match status" value="1"/>
</dbReference>
<dbReference type="PRINTS" id="PR00315">
    <property type="entry name" value="ELONGATNFCT"/>
</dbReference>
<dbReference type="SMART" id="SM00838">
    <property type="entry name" value="EFG_C"/>
    <property type="match status" value="1"/>
</dbReference>
<dbReference type="SMART" id="SM00889">
    <property type="entry name" value="EFG_IV"/>
    <property type="match status" value="1"/>
</dbReference>
<dbReference type="SUPFAM" id="SSF54980">
    <property type="entry name" value="EF-G C-terminal domain-like"/>
    <property type="match status" value="2"/>
</dbReference>
<dbReference type="SUPFAM" id="SSF52540">
    <property type="entry name" value="P-loop containing nucleoside triphosphate hydrolases"/>
    <property type="match status" value="1"/>
</dbReference>
<dbReference type="SUPFAM" id="SSF54211">
    <property type="entry name" value="Ribosomal protein S5 domain 2-like"/>
    <property type="match status" value="1"/>
</dbReference>
<dbReference type="SUPFAM" id="SSF50447">
    <property type="entry name" value="Translation proteins"/>
    <property type="match status" value="1"/>
</dbReference>
<dbReference type="PROSITE" id="PS00301">
    <property type="entry name" value="G_TR_1"/>
    <property type="match status" value="1"/>
</dbReference>
<dbReference type="PROSITE" id="PS51722">
    <property type="entry name" value="G_TR_2"/>
    <property type="match status" value="1"/>
</dbReference>
<reference key="1">
    <citation type="journal article" date="1991" name="Eur. J. Biochem.">
        <title>Mitochondrial translational-initiation and elongation factors in Saccharomyces cerevisiae.</title>
        <authorList>
            <person name="Vambutas A."/>
            <person name="Ackerman S.H."/>
            <person name="Tzagoloff A."/>
        </authorList>
    </citation>
    <scope>NUCLEOTIDE SEQUENCE [GENOMIC DNA]</scope>
</reference>
<reference key="2">
    <citation type="journal article" date="1997" name="Nature">
        <title>The nucleotide sequence of Saccharomyces cerevisiae chromosome XII.</title>
        <authorList>
            <person name="Johnston M."/>
            <person name="Hillier L.W."/>
            <person name="Riles L."/>
            <person name="Albermann K."/>
            <person name="Andre B."/>
            <person name="Ansorge W."/>
            <person name="Benes V."/>
            <person name="Brueckner M."/>
            <person name="Delius H."/>
            <person name="Dubois E."/>
            <person name="Duesterhoeft A."/>
            <person name="Entian K.-D."/>
            <person name="Floeth M."/>
            <person name="Goffeau A."/>
            <person name="Hebling U."/>
            <person name="Heumann K."/>
            <person name="Heuss-Neitzel D."/>
            <person name="Hilbert H."/>
            <person name="Hilger F."/>
            <person name="Kleine K."/>
            <person name="Koetter P."/>
            <person name="Louis E.J."/>
            <person name="Messenguy F."/>
            <person name="Mewes H.-W."/>
            <person name="Miosga T."/>
            <person name="Moestl D."/>
            <person name="Mueller-Auer S."/>
            <person name="Nentwich U."/>
            <person name="Obermaier B."/>
            <person name="Piravandi E."/>
            <person name="Pohl T.M."/>
            <person name="Portetelle D."/>
            <person name="Purnelle B."/>
            <person name="Rechmann S."/>
            <person name="Rieger M."/>
            <person name="Rinke M."/>
            <person name="Rose M."/>
            <person name="Scharfe M."/>
            <person name="Scherens B."/>
            <person name="Scholler P."/>
            <person name="Schwager C."/>
            <person name="Schwarz S."/>
            <person name="Underwood A.P."/>
            <person name="Urrestarazu L.A."/>
            <person name="Vandenbol M."/>
            <person name="Verhasselt P."/>
            <person name="Vierendeels F."/>
            <person name="Voet M."/>
            <person name="Volckaert G."/>
            <person name="Voss H."/>
            <person name="Wambutt R."/>
            <person name="Wedler E."/>
            <person name="Wedler H."/>
            <person name="Zimmermann F.K."/>
            <person name="Zollner A."/>
            <person name="Hani J."/>
            <person name="Hoheisel J.D."/>
        </authorList>
    </citation>
    <scope>NUCLEOTIDE SEQUENCE [LARGE SCALE GENOMIC DNA]</scope>
    <source>
        <strain>ATCC 204508 / S288c</strain>
    </source>
</reference>
<reference key="3">
    <citation type="journal article" date="2014" name="G3 (Bethesda)">
        <title>The reference genome sequence of Saccharomyces cerevisiae: Then and now.</title>
        <authorList>
            <person name="Engel S.R."/>
            <person name="Dietrich F.S."/>
            <person name="Fisk D.G."/>
            <person name="Binkley G."/>
            <person name="Balakrishnan R."/>
            <person name="Costanzo M.C."/>
            <person name="Dwight S.S."/>
            <person name="Hitz B.C."/>
            <person name="Karra K."/>
            <person name="Nash R.S."/>
            <person name="Weng S."/>
            <person name="Wong E.D."/>
            <person name="Lloyd P."/>
            <person name="Skrzypek M.S."/>
            <person name="Miyasato S.R."/>
            <person name="Simison M."/>
            <person name="Cherry J.M."/>
        </authorList>
    </citation>
    <scope>GENOME REANNOTATION</scope>
    <source>
        <strain>ATCC 204508 / S288c</strain>
    </source>
</reference>
<reference key="4">
    <citation type="journal article" date="2007" name="Genome Res.">
        <title>Approaching a complete repository of sequence-verified protein-encoding clones for Saccharomyces cerevisiae.</title>
        <authorList>
            <person name="Hu Y."/>
            <person name="Rolfs A."/>
            <person name="Bhullar B."/>
            <person name="Murthy T.V.S."/>
            <person name="Zhu C."/>
            <person name="Berger M.F."/>
            <person name="Camargo A.A."/>
            <person name="Kelley F."/>
            <person name="McCarron S."/>
            <person name="Jepson D."/>
            <person name="Richardson A."/>
            <person name="Raphael J."/>
            <person name="Moreira D."/>
            <person name="Taycher E."/>
            <person name="Zuo D."/>
            <person name="Mohr S."/>
            <person name="Kane M.F."/>
            <person name="Williamson J."/>
            <person name="Simpson A.J.G."/>
            <person name="Bulyk M.L."/>
            <person name="Harlow E."/>
            <person name="Marsischky G."/>
            <person name="Kolodner R.D."/>
            <person name="LaBaer J."/>
        </authorList>
    </citation>
    <scope>NUCLEOTIDE SEQUENCE [GENOMIC DNA]</scope>
    <source>
        <strain>ATCC 204508 / S288c</strain>
    </source>
</reference>
<reference key="5">
    <citation type="journal article" date="1995" name="J. Biol. Chem.">
        <title>Prediction and identification of new natural substrates of the yeast mitochondrial intermediate peptidase.</title>
        <authorList>
            <person name="Branda S.S."/>
            <person name="Isaya G."/>
        </authorList>
    </citation>
    <scope>IDENTIFICATION OF PROBABLE CLEAVAGE SITE</scope>
</reference>
<reference key="6">
    <citation type="journal article" date="2003" name="Nature">
        <title>Global analysis of protein localization in budding yeast.</title>
        <authorList>
            <person name="Huh W.-K."/>
            <person name="Falvo J.V."/>
            <person name="Gerke L.C."/>
            <person name="Carroll A.S."/>
            <person name="Howson R.W."/>
            <person name="Weissman J.S."/>
            <person name="O'Shea E.K."/>
        </authorList>
    </citation>
    <scope>SUBCELLULAR LOCATION [LARGE SCALE ANALYSIS]</scope>
</reference>
<reference key="7">
    <citation type="journal article" date="2003" name="Nature">
        <title>Global analysis of protein expression in yeast.</title>
        <authorList>
            <person name="Ghaemmaghami S."/>
            <person name="Huh W.-K."/>
            <person name="Bower K."/>
            <person name="Howson R.W."/>
            <person name="Belle A."/>
            <person name="Dephoure N."/>
            <person name="O'Shea E.K."/>
            <person name="Weissman J.S."/>
        </authorList>
    </citation>
    <scope>LEVEL OF PROTEIN EXPRESSION [LARGE SCALE ANALYSIS]</scope>
</reference>
<reference key="8">
    <citation type="journal article" date="2003" name="Proc. Natl. Acad. Sci. U.S.A.">
        <title>The proteome of Saccharomyces cerevisiae mitochondria.</title>
        <authorList>
            <person name="Sickmann A."/>
            <person name="Reinders J."/>
            <person name="Wagner Y."/>
            <person name="Joppich C."/>
            <person name="Zahedi R.P."/>
            <person name="Meyer H.E."/>
            <person name="Schoenfisch B."/>
            <person name="Perschil I."/>
            <person name="Chacinska A."/>
            <person name="Guiard B."/>
            <person name="Rehling P."/>
            <person name="Pfanner N."/>
            <person name="Meisinger C."/>
        </authorList>
    </citation>
    <scope>SUBCELLULAR LOCATION [LARGE SCALE ANALYSIS]</scope>
    <source>
        <strain>ATCC 76625 / YPH499</strain>
    </source>
</reference>
<reference key="9">
    <citation type="journal article" date="2008" name="Mol. Cell. Proteomics">
        <title>A multidimensional chromatography technology for in-depth phosphoproteome analysis.</title>
        <authorList>
            <person name="Albuquerque C.P."/>
            <person name="Smolka M.B."/>
            <person name="Payne S.H."/>
            <person name="Bafna V."/>
            <person name="Eng J."/>
            <person name="Zhou H."/>
        </authorList>
    </citation>
    <scope>IDENTIFICATION BY MASS SPECTROMETRY [LARGE SCALE ANALYSIS]</scope>
</reference>
<protein>
    <recommendedName>
        <fullName evidence="1">Elongation factor G, mitochondrial</fullName>
        <shortName evidence="1">EF-Gmt</shortName>
    </recommendedName>
    <alternativeName>
        <fullName evidence="1">Elongation factor G 1, mitochondrial</fullName>
        <shortName evidence="1">mEF-G 1</shortName>
    </alternativeName>
    <alternativeName>
        <fullName evidence="1">Elongation factor G1</fullName>
    </alternativeName>
</protein>
<comment type="function">
    <text evidence="1">Mitochondrial GTPase that catalyzes the GTP-dependent ribosomal translocation step during translation elongation. During this step, the ribosome changes from the pre-translocational (PRE) to the post-translocational (POST) state as the newly formed A-site-bound peptidyl-tRNA and P-site-bound deacylated tRNA move to the P and E sites, respectively. Catalyzes the coordinated movement of the two tRNA molecules, the mRNA and conformational changes in the ribosome.</text>
</comment>
<comment type="pathway">
    <text evidence="1">Protein biosynthesis; polypeptide chain elongation.</text>
</comment>
<comment type="subcellular location">
    <subcellularLocation>
        <location evidence="1 2 4">Mitochondrion</location>
    </subcellularLocation>
</comment>
<comment type="PTM">
    <text evidence="1">The precursor is processed in two steps involving mitochondrial intermediate peptidase (MIP) and mitochondrial processing peptidase (MPP).</text>
</comment>
<comment type="miscellaneous">
    <text evidence="3">Present with 6348 molecules/cell in log phase SD medium.</text>
</comment>
<comment type="similarity">
    <text evidence="5">Belongs to the TRAFAC class translation factor GTPase superfamily. Classic translation factor GTPase family. EF-G/EF-2 subfamily.</text>
</comment>
<feature type="transit peptide" description="Mitochondrion" evidence="1">
    <location>
        <begin position="1"/>
        <end position="42"/>
    </location>
</feature>
<feature type="chain" id="PRO_0000007449" description="Elongation factor G, mitochondrial">
    <location>
        <begin position="43"/>
        <end position="761"/>
    </location>
</feature>
<feature type="domain" description="tr-type G">
    <location>
        <begin position="68"/>
        <end position="349"/>
    </location>
</feature>
<feature type="binding site" evidence="1">
    <location>
        <begin position="77"/>
        <end position="84"/>
    </location>
    <ligand>
        <name>GTP</name>
        <dbReference type="ChEBI" id="CHEBI:37565"/>
    </ligand>
</feature>
<feature type="binding site" evidence="1">
    <location>
        <begin position="148"/>
        <end position="152"/>
    </location>
    <ligand>
        <name>GTP</name>
        <dbReference type="ChEBI" id="CHEBI:37565"/>
    </ligand>
</feature>
<feature type="binding site" evidence="1">
    <location>
        <begin position="202"/>
        <end position="205"/>
    </location>
    <ligand>
        <name>GTP</name>
        <dbReference type="ChEBI" id="CHEBI:37565"/>
    </ligand>
</feature>
<feature type="sequence conflict" description="In Ref. 4; AAT92963." evidence="5" ref="4">
    <original>S</original>
    <variation>C</variation>
    <location>
        <position position="2"/>
    </location>
</feature>
<feature type="sequence conflict" description="In Ref. 1; CAA41267." evidence="5" ref="1">
    <original>R</original>
    <variation>I</variation>
    <location>
        <position position="66"/>
    </location>
</feature>
<feature type="sequence conflict" description="In Ref. 1; CAA41267." evidence="5" ref="1">
    <original>I</original>
    <variation>V</variation>
    <location>
        <position position="233"/>
    </location>
</feature>
<feature type="sequence conflict" description="In Ref. 1; CAA41267." evidence="5" ref="1">
    <original>P</original>
    <variation>S</variation>
    <location>
        <position position="478"/>
    </location>
</feature>
<feature type="sequence conflict" description="In Ref. 1; CAA41267." evidence="5" ref="1">
    <original>L</original>
    <variation>P</variation>
    <location>
        <position position="629"/>
    </location>
</feature>
<accession>P25039</accession>
<accession>D6VY70</accession>
<accession>Q6B1Y6</accession>
<accession>Q99360</accession>
<name>EFGM_YEAST</name>
<gene>
    <name evidence="1" type="primary">MEF1</name>
    <name type="ordered locus">YLR069C</name>
    <name type="ORF">L2195</name>
</gene>